<name>LFTR_ALIF1</name>
<evidence type="ECO:0000255" key="1">
    <source>
        <dbReference type="HAMAP-Rule" id="MF_00688"/>
    </source>
</evidence>
<protein>
    <recommendedName>
        <fullName evidence="1">Leucyl/phenylalanyl-tRNA--protein transferase</fullName>
        <ecNumber evidence="1">2.3.2.6</ecNumber>
    </recommendedName>
    <alternativeName>
        <fullName evidence="1">L/F-transferase</fullName>
    </alternativeName>
    <alternativeName>
        <fullName evidence="1">Leucyltransferase</fullName>
    </alternativeName>
    <alternativeName>
        <fullName evidence="1">Phenyalanyltransferase</fullName>
    </alternativeName>
</protein>
<keyword id="KW-0012">Acyltransferase</keyword>
<keyword id="KW-0963">Cytoplasm</keyword>
<keyword id="KW-1185">Reference proteome</keyword>
<keyword id="KW-0808">Transferase</keyword>
<comment type="function">
    <text evidence="1">Functions in the N-end rule pathway of protein degradation where it conjugates Leu, Phe and, less efficiently, Met from aminoacyl-tRNAs to the N-termini of proteins containing an N-terminal arginine or lysine.</text>
</comment>
<comment type="catalytic activity">
    <reaction evidence="1">
        <text>N-terminal L-lysyl-[protein] + L-leucyl-tRNA(Leu) = N-terminal L-leucyl-L-lysyl-[protein] + tRNA(Leu) + H(+)</text>
        <dbReference type="Rhea" id="RHEA:12340"/>
        <dbReference type="Rhea" id="RHEA-COMP:9613"/>
        <dbReference type="Rhea" id="RHEA-COMP:9622"/>
        <dbReference type="Rhea" id="RHEA-COMP:12670"/>
        <dbReference type="Rhea" id="RHEA-COMP:12671"/>
        <dbReference type="ChEBI" id="CHEBI:15378"/>
        <dbReference type="ChEBI" id="CHEBI:65249"/>
        <dbReference type="ChEBI" id="CHEBI:78442"/>
        <dbReference type="ChEBI" id="CHEBI:78494"/>
        <dbReference type="ChEBI" id="CHEBI:133043"/>
        <dbReference type="EC" id="2.3.2.6"/>
    </reaction>
</comment>
<comment type="catalytic activity">
    <reaction evidence="1">
        <text>N-terminal L-arginyl-[protein] + L-leucyl-tRNA(Leu) = N-terminal L-leucyl-L-arginyl-[protein] + tRNA(Leu) + H(+)</text>
        <dbReference type="Rhea" id="RHEA:50416"/>
        <dbReference type="Rhea" id="RHEA-COMP:9613"/>
        <dbReference type="Rhea" id="RHEA-COMP:9622"/>
        <dbReference type="Rhea" id="RHEA-COMP:12672"/>
        <dbReference type="Rhea" id="RHEA-COMP:12673"/>
        <dbReference type="ChEBI" id="CHEBI:15378"/>
        <dbReference type="ChEBI" id="CHEBI:64719"/>
        <dbReference type="ChEBI" id="CHEBI:78442"/>
        <dbReference type="ChEBI" id="CHEBI:78494"/>
        <dbReference type="ChEBI" id="CHEBI:133044"/>
        <dbReference type="EC" id="2.3.2.6"/>
    </reaction>
</comment>
<comment type="catalytic activity">
    <reaction evidence="1">
        <text>L-phenylalanyl-tRNA(Phe) + an N-terminal L-alpha-aminoacyl-[protein] = an N-terminal L-phenylalanyl-L-alpha-aminoacyl-[protein] + tRNA(Phe)</text>
        <dbReference type="Rhea" id="RHEA:43632"/>
        <dbReference type="Rhea" id="RHEA-COMP:9668"/>
        <dbReference type="Rhea" id="RHEA-COMP:9699"/>
        <dbReference type="Rhea" id="RHEA-COMP:10636"/>
        <dbReference type="Rhea" id="RHEA-COMP:10637"/>
        <dbReference type="ChEBI" id="CHEBI:78442"/>
        <dbReference type="ChEBI" id="CHEBI:78531"/>
        <dbReference type="ChEBI" id="CHEBI:78597"/>
        <dbReference type="ChEBI" id="CHEBI:83561"/>
        <dbReference type="EC" id="2.3.2.6"/>
    </reaction>
</comment>
<comment type="subcellular location">
    <subcellularLocation>
        <location evidence="1">Cytoplasm</location>
    </subcellularLocation>
</comment>
<comment type="similarity">
    <text evidence="1">Belongs to the L/F-transferase family.</text>
</comment>
<organism>
    <name type="scientific">Aliivibrio fischeri (strain ATCC 700601 / ES114)</name>
    <name type="common">Vibrio fischeri</name>
    <dbReference type="NCBI Taxonomy" id="312309"/>
    <lineage>
        <taxon>Bacteria</taxon>
        <taxon>Pseudomonadati</taxon>
        <taxon>Pseudomonadota</taxon>
        <taxon>Gammaproteobacteria</taxon>
        <taxon>Vibrionales</taxon>
        <taxon>Vibrionaceae</taxon>
        <taxon>Aliivibrio</taxon>
    </lineage>
</organism>
<feature type="chain" id="PRO_0000258109" description="Leucyl/phenylalanyl-tRNA--protein transferase">
    <location>
        <begin position="1"/>
        <end position="239"/>
    </location>
</feature>
<reference key="1">
    <citation type="journal article" date="2005" name="Proc. Natl. Acad. Sci. U.S.A.">
        <title>Complete genome sequence of Vibrio fischeri: a symbiotic bacterium with pathogenic congeners.</title>
        <authorList>
            <person name="Ruby E.G."/>
            <person name="Urbanowski M."/>
            <person name="Campbell J."/>
            <person name="Dunn A."/>
            <person name="Faini M."/>
            <person name="Gunsalus R."/>
            <person name="Lostroh P."/>
            <person name="Lupp C."/>
            <person name="McCann J."/>
            <person name="Millikan D."/>
            <person name="Schaefer A."/>
            <person name="Stabb E."/>
            <person name="Stevens A."/>
            <person name="Visick K."/>
            <person name="Whistler C."/>
            <person name="Greenberg E.P."/>
        </authorList>
    </citation>
    <scope>NUCLEOTIDE SEQUENCE [LARGE SCALE GENOMIC DNA]</scope>
    <source>
        <strain>ATCC 700601 / ES114</strain>
    </source>
</reference>
<dbReference type="EC" id="2.3.2.6" evidence="1"/>
<dbReference type="EMBL" id="CP000020">
    <property type="protein sequence ID" value="AAW86257.1"/>
    <property type="molecule type" value="Genomic_DNA"/>
</dbReference>
<dbReference type="RefSeq" id="WP_011262300.1">
    <property type="nucleotide sequence ID" value="NC_006840.2"/>
</dbReference>
<dbReference type="RefSeq" id="YP_205145.1">
    <property type="nucleotide sequence ID" value="NC_006840.2"/>
</dbReference>
<dbReference type="SMR" id="Q5E3Y9"/>
<dbReference type="STRING" id="312309.VF_1762"/>
<dbReference type="EnsemblBacteria" id="AAW86257">
    <property type="protein sequence ID" value="AAW86257"/>
    <property type="gene ID" value="VF_1762"/>
</dbReference>
<dbReference type="GeneID" id="54164461"/>
<dbReference type="KEGG" id="vfi:VF_1762"/>
<dbReference type="PATRIC" id="fig|312309.11.peg.1788"/>
<dbReference type="eggNOG" id="COG2360">
    <property type="taxonomic scope" value="Bacteria"/>
</dbReference>
<dbReference type="HOGENOM" id="CLU_075045_0_0_6"/>
<dbReference type="OrthoDB" id="9790282at2"/>
<dbReference type="Proteomes" id="UP000000537">
    <property type="component" value="Chromosome I"/>
</dbReference>
<dbReference type="GO" id="GO:0005737">
    <property type="term" value="C:cytoplasm"/>
    <property type="evidence" value="ECO:0007669"/>
    <property type="project" value="UniProtKB-SubCell"/>
</dbReference>
<dbReference type="GO" id="GO:0008914">
    <property type="term" value="F:leucyl-tRNA--protein transferase activity"/>
    <property type="evidence" value="ECO:0007669"/>
    <property type="project" value="UniProtKB-UniRule"/>
</dbReference>
<dbReference type="GO" id="GO:0030163">
    <property type="term" value="P:protein catabolic process"/>
    <property type="evidence" value="ECO:0007669"/>
    <property type="project" value="UniProtKB-UniRule"/>
</dbReference>
<dbReference type="FunFam" id="3.30.70.3550:FF:000001">
    <property type="entry name" value="Leucyl/phenylalanyl-tRNA--protein transferase"/>
    <property type="match status" value="1"/>
</dbReference>
<dbReference type="FunFam" id="3.40.630.70:FF:000001">
    <property type="entry name" value="Leucyl/phenylalanyl-tRNA--protein transferase"/>
    <property type="match status" value="1"/>
</dbReference>
<dbReference type="Gene3D" id="3.40.630.70">
    <property type="entry name" value="Leucyl/phenylalanyl-tRNA-protein transferase, C-terminal domain"/>
    <property type="match status" value="1"/>
</dbReference>
<dbReference type="Gene3D" id="3.30.70.3550">
    <property type="entry name" value="Leucyl/phenylalanyl-tRNA-protein transferase, N-terminal domain"/>
    <property type="match status" value="1"/>
</dbReference>
<dbReference type="HAMAP" id="MF_00688">
    <property type="entry name" value="Leu_Phe_trans"/>
    <property type="match status" value="1"/>
</dbReference>
<dbReference type="InterPro" id="IPR016181">
    <property type="entry name" value="Acyl_CoA_acyltransferase"/>
</dbReference>
<dbReference type="InterPro" id="IPR004616">
    <property type="entry name" value="Leu/Phe-tRNA_Trfase"/>
</dbReference>
<dbReference type="InterPro" id="IPR042203">
    <property type="entry name" value="Leu/Phe-tRNA_Trfase_C"/>
</dbReference>
<dbReference type="InterPro" id="IPR042221">
    <property type="entry name" value="Leu/Phe-tRNA_Trfase_N"/>
</dbReference>
<dbReference type="NCBIfam" id="TIGR00667">
    <property type="entry name" value="aat"/>
    <property type="match status" value="1"/>
</dbReference>
<dbReference type="PANTHER" id="PTHR30098">
    <property type="entry name" value="LEUCYL/PHENYLALANYL-TRNA--PROTEIN TRANSFERASE"/>
    <property type="match status" value="1"/>
</dbReference>
<dbReference type="PANTHER" id="PTHR30098:SF2">
    <property type="entry name" value="LEUCYL_PHENYLALANYL-TRNA--PROTEIN TRANSFERASE"/>
    <property type="match status" value="1"/>
</dbReference>
<dbReference type="Pfam" id="PF03588">
    <property type="entry name" value="Leu_Phe_trans"/>
    <property type="match status" value="1"/>
</dbReference>
<dbReference type="SUPFAM" id="SSF55729">
    <property type="entry name" value="Acyl-CoA N-acyltransferases (Nat)"/>
    <property type="match status" value="1"/>
</dbReference>
<accession>Q5E3Y9</accession>
<sequence length="239" mass="27102">MTIYLPELIPSHSTVFPDIENALNNPDGLLIMGGDLSSKQLISAYQHGIFPWYSNGDPILWWSPSVRGVFFPEQFSPSKSLKKFFRKSNYNVTLNKATYQVIDLCASTRPKEETWIMPEMINAYKKLANLGYCHSVEVWNEDELIGGLYGLQIGQIFCGESMFSLQTNASKIALWKFCEHFVSFNGKLIDCQMMNPHLESLGAKEMKRCDFKTLLEELSTKSTIANCYLPQILGDNSLS</sequence>
<gene>
    <name evidence="1" type="primary">aat</name>
    <name type="ordered locus">VF_1762</name>
</gene>
<proteinExistence type="inferred from homology"/>